<protein>
    <recommendedName>
        <fullName>Histone H2B 2</fullName>
    </recommendedName>
</protein>
<sequence>MAPPKPSAKGAKKAAKTVTKPKDGKKRRHARKESYSVYIYRVLKQVHPDTGVSSKAMSIMNSFVNDVFERIAAEASRLAHYNKRSTISSREIQTAVRLILPGELAKHAVSEGTKAVTKYTSSK</sequence>
<accession>Q27894</accession>
<accession>Q95NR2</accession>
<accession>Q9U373</accession>
<comment type="function">
    <text>Core component of nucleosome. Nucleosomes wrap and compact DNA into chromatin, limiting DNA accessibility to the cellular machineries which require DNA as a template. Histones thereby play a central role in transcription regulation, DNA repair, DNA replication and chromosomal stability. DNA accessibility is regulated via a complex set of post-translational modifications of histones, also called histone code, and nucleosome remodeling.</text>
</comment>
<comment type="subunit">
    <text>The nucleosome is a histone octamer containing two molecules each of H2A, H2B, H3 and H4 assembled in one H3-H4 heterotetramer and two H2A-H2B heterodimers. The octamer wraps approximately 147 bp of DNA.</text>
</comment>
<comment type="subcellular location">
    <subcellularLocation>
        <location>Nucleus</location>
    </subcellularLocation>
    <subcellularLocation>
        <location>Chromosome</location>
    </subcellularLocation>
</comment>
<comment type="PTM">
    <text evidence="1">Monoubiquitination of Lys-118 gives a specific tag for epigenetic transcriptional activation and is also prerequisite for histone H3 'Lys-4' and 'Lys-79' methylation.</text>
</comment>
<comment type="PTM">
    <text evidence="1">GlcNAcylation at Ser-110 promotes monoubiquitination of Lys-118. It fluctuates in response to extracellular glucose, and associates with transcribed genes (By similarity).</text>
</comment>
<comment type="similarity">
    <text evidence="4">Belongs to the histone H2B family.</text>
</comment>
<comment type="sequence caution" evidence="4">
    <conflict type="erroneous initiation">
        <sequence resource="EMBL-CDS" id="CCD68873"/>
    </conflict>
    <text>Extended N-terminus.</text>
</comment>
<reference key="1">
    <citation type="journal article" date="1998" name="Science">
        <title>Genome sequence of the nematode C. elegans: a platform for investigating biology.</title>
        <authorList>
            <consortium name="The C. elegans sequencing consortium"/>
        </authorList>
    </citation>
    <scope>NUCLEOTIDE SEQUENCE [LARGE SCALE GENOMIC DNA]</scope>
    <source>
        <strain>Bristol N2</strain>
    </source>
</reference>
<reference key="2">
    <citation type="journal article" date="1986" name="Biochem. J.">
        <title>Multiple forms of histone H2B from the nematode Caenorhabditis elegans.</title>
        <authorList>
            <person name="Vanfleteren J.R."/>
            <person name="van Bun S.M."/>
            <person name="Delcambe L.L."/>
            <person name="van Beeumen J.J."/>
        </authorList>
    </citation>
    <scope>PROTEIN SEQUENCE OF 2-123</scope>
</reference>
<evidence type="ECO:0000250" key="1"/>
<evidence type="ECO:0000256" key="2">
    <source>
        <dbReference type="SAM" id="MobiDB-lite"/>
    </source>
</evidence>
<evidence type="ECO:0000269" key="3">
    <source>
    </source>
</evidence>
<evidence type="ECO:0000305" key="4"/>
<evidence type="ECO:0007829" key="5">
    <source>
        <dbReference type="PDB" id="6K0C"/>
    </source>
</evidence>
<name>H2B2_CAEEL</name>
<gene>
    <name type="primary">his-4</name>
    <name type="ORF">T10C6.11</name>
</gene>
<gene>
    <name type="primary">his-8</name>
    <name type="ORF">F45F2.12</name>
</gene>
<gene>
    <name type="primary">his-20</name>
    <name type="ORF">K06C4.4</name>
</gene>
<gene>
    <name type="primary">his-22</name>
    <name type="ORF">K06C4.12</name>
</gene>
<gene>
    <name type="primary">his-52</name>
    <name type="ORF">F07B7.4</name>
</gene>
<gene>
    <name type="primary">his-54</name>
    <name type="ORF">F07B7.11</name>
</gene>
<organism>
    <name type="scientific">Caenorhabditis elegans</name>
    <dbReference type="NCBI Taxonomy" id="6239"/>
    <lineage>
        <taxon>Eukaryota</taxon>
        <taxon>Metazoa</taxon>
        <taxon>Ecdysozoa</taxon>
        <taxon>Nematoda</taxon>
        <taxon>Chromadorea</taxon>
        <taxon>Rhabditida</taxon>
        <taxon>Rhabditina</taxon>
        <taxon>Rhabditomorpha</taxon>
        <taxon>Rhabditoidea</taxon>
        <taxon>Rhabditidae</taxon>
        <taxon>Peloderinae</taxon>
        <taxon>Caenorhabditis</taxon>
    </lineage>
</organism>
<dbReference type="EMBL" id="FO081059">
    <property type="protein sequence ID" value="CCD68867.2"/>
    <property type="molecule type" value="Genomic_DNA"/>
</dbReference>
<dbReference type="EMBL" id="FO081059">
    <property type="protein sequence ID" value="CCD68873.1"/>
    <property type="status" value="ALT_INIT"/>
    <property type="molecule type" value="Genomic_DNA"/>
</dbReference>
<dbReference type="EMBL" id="FO081551">
    <property type="protein sequence ID" value="CCD72362.1"/>
    <property type="molecule type" value="Genomic_DNA"/>
</dbReference>
<dbReference type="EMBL" id="FO081551">
    <property type="protein sequence ID" value="CCD72372.1"/>
    <property type="molecule type" value="Genomic_DNA"/>
</dbReference>
<dbReference type="EMBL" id="FO081223">
    <property type="protein sequence ID" value="CCD70026.1"/>
    <property type="molecule type" value="Genomic_DNA"/>
</dbReference>
<dbReference type="EMBL" id="Z93388">
    <property type="protein sequence ID" value="CAB07654.2"/>
    <property type="molecule type" value="Genomic_DNA"/>
</dbReference>
<dbReference type="PIR" id="T24788">
    <property type="entry name" value="T24788"/>
</dbReference>
<dbReference type="PIR" id="T30054">
    <property type="entry name" value="HSKW22"/>
</dbReference>
<dbReference type="RefSeq" id="NP_505197.1">
    <property type="nucleotide sequence ID" value="NM_072796.1"/>
</dbReference>
<dbReference type="RefSeq" id="NP_505278.2">
    <property type="nucleotide sequence ID" value="NM_072877.2"/>
</dbReference>
<dbReference type="RefSeq" id="NP_505294.1">
    <property type="nucleotide sequence ID" value="NM_072893.1"/>
</dbReference>
<dbReference type="RefSeq" id="NP_505295.1">
    <property type="nucleotide sequence ID" value="NM_072894.1"/>
</dbReference>
<dbReference type="RefSeq" id="NP_507031.2">
    <property type="nucleotide sequence ID" value="NM_074630.5"/>
</dbReference>
<dbReference type="PDB" id="6K0C">
    <property type="method" value="X-ray"/>
    <property type="resolution" value="2.28 A"/>
    <property type="chains" value="D=31-123"/>
</dbReference>
<dbReference type="PDBsum" id="6K0C"/>
<dbReference type="SMR" id="Q27894"/>
<dbReference type="BioGRID" id="44300">
    <property type="interactions" value="1"/>
</dbReference>
<dbReference type="BioGRID" id="44304">
    <property type="interactions" value="1"/>
</dbReference>
<dbReference type="BioGRID" id="45063">
    <property type="interactions" value="4"/>
</dbReference>
<dbReference type="BioGRID" id="48916">
    <property type="interactions" value="1"/>
</dbReference>
<dbReference type="BioGRID" id="56171">
    <property type="interactions" value="2"/>
</dbReference>
<dbReference type="BioGRID" id="56175">
    <property type="interactions" value="1"/>
</dbReference>
<dbReference type="DIP" id="DIP-26826N"/>
<dbReference type="FunCoup" id="Q27894">
    <property type="interactions" value="1061"/>
</dbReference>
<dbReference type="STRING" id="6239.F07B7.11.1"/>
<dbReference type="GlyCosmos" id="Q27894">
    <property type="glycosylation" value="1 site, No reported glycans"/>
</dbReference>
<dbReference type="PaxDb" id="6239-F07B7.11"/>
<dbReference type="PeptideAtlas" id="Q27894"/>
<dbReference type="EnsemblMetazoa" id="F07B7.11.1">
    <property type="protein sequence ID" value="F07B7.11.1"/>
    <property type="gene ID" value="WBGene00001928"/>
</dbReference>
<dbReference type="EnsemblMetazoa" id="F07B7.4.1">
    <property type="protein sequence ID" value="F07B7.4.1"/>
    <property type="gene ID" value="WBGene00001926"/>
</dbReference>
<dbReference type="EnsemblMetazoa" id="F45F2.12.1">
    <property type="protein sequence ID" value="F45F2.12.1"/>
    <property type="gene ID" value="WBGene00001882"/>
</dbReference>
<dbReference type="EnsemblMetazoa" id="K06C4.12.1">
    <property type="protein sequence ID" value="K06C4.12.1"/>
    <property type="gene ID" value="WBGene00001896"/>
</dbReference>
<dbReference type="EnsemblMetazoa" id="K06C4.4.1">
    <property type="protein sequence ID" value="K06C4.4.1"/>
    <property type="gene ID" value="WBGene00001894"/>
</dbReference>
<dbReference type="EnsemblMetazoa" id="T10C6.11.1">
    <property type="protein sequence ID" value="T10C6.11.1"/>
    <property type="gene ID" value="WBGene00001878"/>
</dbReference>
<dbReference type="GeneID" id="179262"/>
<dbReference type="GeneID" id="179266"/>
<dbReference type="GeneID" id="180072"/>
<dbReference type="GeneID" id="191670"/>
<dbReference type="GeneID" id="191675"/>
<dbReference type="KEGG" id="cel:CELE_F07B7.4"/>
<dbReference type="KEGG" id="cel:CELE_F45F2.12"/>
<dbReference type="KEGG" id="cel:CELE_K06C4.12"/>
<dbReference type="KEGG" id="cel:CELE_K06C4.4"/>
<dbReference type="KEGG" id="cel:CELE_T10C6.11"/>
<dbReference type="UCSC" id="F45F2.12">
    <property type="organism name" value="c. elegans"/>
</dbReference>
<dbReference type="AGR" id="WB:WBGene00001878"/>
<dbReference type="AGR" id="WB:WBGene00001882"/>
<dbReference type="AGR" id="WB:WBGene00001894"/>
<dbReference type="AGR" id="WB:WBGene00001896"/>
<dbReference type="AGR" id="WB:WBGene00001926"/>
<dbReference type="AGR" id="WB:WBGene00001928"/>
<dbReference type="CTD" id="179262"/>
<dbReference type="CTD" id="179266"/>
<dbReference type="CTD" id="180072"/>
<dbReference type="CTD" id="191670"/>
<dbReference type="CTD" id="191675"/>
<dbReference type="WormBase" id="F07B7.11">
    <property type="protein sequence ID" value="CE10538"/>
    <property type="gene ID" value="WBGene00001928"/>
    <property type="gene designation" value="his-54"/>
</dbReference>
<dbReference type="WormBase" id="F07B7.4">
    <property type="protein sequence ID" value="CE10538"/>
    <property type="gene ID" value="WBGene00001926"/>
    <property type="gene designation" value="his-52"/>
</dbReference>
<dbReference type="WormBase" id="F45F2.12">
    <property type="protein sequence ID" value="CE10538"/>
    <property type="gene ID" value="WBGene00001882"/>
    <property type="gene designation" value="his-8"/>
</dbReference>
<dbReference type="WormBase" id="K06C4.12">
    <property type="protein sequence ID" value="CE10538"/>
    <property type="gene ID" value="WBGene00001896"/>
    <property type="gene designation" value="his-22"/>
</dbReference>
<dbReference type="WormBase" id="K06C4.4">
    <property type="protein sequence ID" value="CE10538"/>
    <property type="gene ID" value="WBGene00001894"/>
    <property type="gene designation" value="his-20"/>
</dbReference>
<dbReference type="WormBase" id="T10C6.11">
    <property type="protein sequence ID" value="CE10538"/>
    <property type="gene ID" value="WBGene00001878"/>
    <property type="gene designation" value="his-4"/>
</dbReference>
<dbReference type="eggNOG" id="KOG1744">
    <property type="taxonomic scope" value="Eukaryota"/>
</dbReference>
<dbReference type="GeneTree" id="ENSGT01130000278348"/>
<dbReference type="HOGENOM" id="CLU_075666_2_1_1"/>
<dbReference type="InParanoid" id="Q27894"/>
<dbReference type="OMA" id="LIEPILW"/>
<dbReference type="OrthoDB" id="5807605at2759"/>
<dbReference type="PhylomeDB" id="Q27894"/>
<dbReference type="PRO" id="PR:Q27894"/>
<dbReference type="Proteomes" id="UP000001940">
    <property type="component" value="Chromosome V"/>
</dbReference>
<dbReference type="Bgee" id="WBGene00001878">
    <property type="expression patterns" value="Expressed in pharyngeal muscle cell (C elegans) and 3 other cell types or tissues"/>
</dbReference>
<dbReference type="GO" id="GO:0000786">
    <property type="term" value="C:nucleosome"/>
    <property type="evidence" value="ECO:0007669"/>
    <property type="project" value="UniProtKB-KW"/>
</dbReference>
<dbReference type="GO" id="GO:0005634">
    <property type="term" value="C:nucleus"/>
    <property type="evidence" value="ECO:0007669"/>
    <property type="project" value="UniProtKB-SubCell"/>
</dbReference>
<dbReference type="GO" id="GO:0003677">
    <property type="term" value="F:DNA binding"/>
    <property type="evidence" value="ECO:0000318"/>
    <property type="project" value="GO_Central"/>
</dbReference>
<dbReference type="GO" id="GO:0046982">
    <property type="term" value="F:protein heterodimerization activity"/>
    <property type="evidence" value="ECO:0007669"/>
    <property type="project" value="InterPro"/>
</dbReference>
<dbReference type="GO" id="GO:0044877">
    <property type="term" value="F:protein-containing complex binding"/>
    <property type="evidence" value="ECO:0000250"/>
    <property type="project" value="UniProtKB"/>
</dbReference>
<dbReference type="GO" id="GO:0030527">
    <property type="term" value="F:structural constituent of chromatin"/>
    <property type="evidence" value="ECO:0007669"/>
    <property type="project" value="InterPro"/>
</dbReference>
<dbReference type="CDD" id="cd22910">
    <property type="entry name" value="HFD_H2B"/>
    <property type="match status" value="1"/>
</dbReference>
<dbReference type="FunFam" id="1.10.20.10:FF:000016">
    <property type="entry name" value="Histone H2B"/>
    <property type="match status" value="1"/>
</dbReference>
<dbReference type="Gene3D" id="1.10.20.10">
    <property type="entry name" value="Histone, subunit A"/>
    <property type="match status" value="1"/>
</dbReference>
<dbReference type="InterPro" id="IPR009072">
    <property type="entry name" value="Histone-fold"/>
</dbReference>
<dbReference type="InterPro" id="IPR007125">
    <property type="entry name" value="Histone_H2A/H2B/H3"/>
</dbReference>
<dbReference type="InterPro" id="IPR000558">
    <property type="entry name" value="Histone_H2B"/>
</dbReference>
<dbReference type="InterPro" id="IPR055333">
    <property type="entry name" value="HISTONE_H2B_site"/>
</dbReference>
<dbReference type="PANTHER" id="PTHR23428">
    <property type="entry name" value="HISTONE H2B"/>
    <property type="match status" value="1"/>
</dbReference>
<dbReference type="Pfam" id="PF00125">
    <property type="entry name" value="Histone"/>
    <property type="match status" value="1"/>
</dbReference>
<dbReference type="PRINTS" id="PR00621">
    <property type="entry name" value="HISTONEH2B"/>
</dbReference>
<dbReference type="SMART" id="SM00427">
    <property type="entry name" value="H2B"/>
    <property type="match status" value="1"/>
</dbReference>
<dbReference type="SUPFAM" id="SSF47113">
    <property type="entry name" value="Histone-fold"/>
    <property type="match status" value="1"/>
</dbReference>
<dbReference type="PROSITE" id="PS00357">
    <property type="entry name" value="HISTONE_H2B"/>
    <property type="match status" value="1"/>
</dbReference>
<proteinExistence type="evidence at protein level"/>
<keyword id="KW-0002">3D-structure</keyword>
<keyword id="KW-0158">Chromosome</keyword>
<keyword id="KW-0903">Direct protein sequencing</keyword>
<keyword id="KW-0238">DNA-binding</keyword>
<keyword id="KW-0325">Glycoprotein</keyword>
<keyword id="KW-1017">Isopeptide bond</keyword>
<keyword id="KW-0544">Nucleosome core</keyword>
<keyword id="KW-0539">Nucleus</keyword>
<keyword id="KW-1185">Reference proteome</keyword>
<keyword id="KW-0832">Ubl conjugation</keyword>
<feature type="initiator methionine" description="Removed" evidence="3">
    <location>
        <position position="1"/>
    </location>
</feature>
<feature type="chain" id="PRO_0000071868" description="Histone H2B 2">
    <location>
        <begin position="2"/>
        <end position="123"/>
    </location>
</feature>
<feature type="region of interest" description="Disordered" evidence="2">
    <location>
        <begin position="1"/>
        <end position="32"/>
    </location>
</feature>
<feature type="glycosylation site" description="O-linked (GlcNAc) serine" evidence="1">
    <location>
        <position position="110"/>
    </location>
</feature>
<feature type="cross-link" description="Glycyl lysine isopeptide (Lys-Gly) (interchain with G-Cter in ubiquitin)" evidence="1">
    <location>
        <position position="118"/>
    </location>
</feature>
<feature type="sequence conflict" description="In Ref. 2; AA sequence." evidence="4" ref="2">
    <original>RH</original>
    <variation>KK</variation>
    <location>
        <begin position="28"/>
        <end position="29"/>
    </location>
</feature>
<feature type="helix" evidence="5">
    <location>
        <begin position="36"/>
        <end position="46"/>
    </location>
</feature>
<feature type="helix" evidence="5">
    <location>
        <begin position="54"/>
        <end position="79"/>
    </location>
</feature>
<feature type="helix" evidence="5">
    <location>
        <begin position="89"/>
        <end position="99"/>
    </location>
</feature>
<feature type="helix" evidence="5">
    <location>
        <begin position="103"/>
        <end position="120"/>
    </location>
</feature>